<organism>
    <name type="scientific">Bos taurus</name>
    <name type="common">Bovine</name>
    <dbReference type="NCBI Taxonomy" id="9913"/>
    <lineage>
        <taxon>Eukaryota</taxon>
        <taxon>Metazoa</taxon>
        <taxon>Chordata</taxon>
        <taxon>Craniata</taxon>
        <taxon>Vertebrata</taxon>
        <taxon>Euteleostomi</taxon>
        <taxon>Mammalia</taxon>
        <taxon>Eutheria</taxon>
        <taxon>Laurasiatheria</taxon>
        <taxon>Artiodactyla</taxon>
        <taxon>Ruminantia</taxon>
        <taxon>Pecora</taxon>
        <taxon>Bovidae</taxon>
        <taxon>Bovinae</taxon>
        <taxon>Bos</taxon>
    </lineage>
</organism>
<comment type="function">
    <text evidence="1">Component of the ESCRT-II complex (endosomal sorting complex required for transport II), which is required for multivesicular body (MVB) formation and sorting of endosomal cargo proteins into MVBs. The MVB pathway mediates delivery of transmembrane proteins into the lumen of the lysosome for degradation. The ESCRT-II complex is probably involved in the recruitment of the ESCRT-III complex. The ESCRT-II complex may also play a role in transcription regulation, possibly via its interaction with ELL (By similarity).</text>
</comment>
<comment type="subunit">
    <text evidence="1">Component of a complex at least composed of ELL, SNF8/EAP30, VPS25/EAP20 and VPS36/EAP45 (By similarity). Component of the ESCRT-II complex (endosomal sorting complex required for transport II), composed of SNF8, VPS36 and 2 copies of VPS25. Interacts with CFTR; the interaction requires misfolded CFTR. Interacts with the ESCRT-III subunit CHMP6 (via N-terminal half) (By similarity).</text>
</comment>
<comment type="subcellular location">
    <subcellularLocation>
        <location evidence="1">Cytoplasm</location>
    </subcellularLocation>
    <subcellularLocation>
        <location evidence="1">Endosome membrane</location>
    </subcellularLocation>
    <subcellularLocation>
        <location evidence="1">Nucleus</location>
    </subcellularLocation>
    <text evidence="1">Distributes diffusely throughout the cytoplasm and nucleoplasm, but exhibits a punctate distribution on coexpression with CHMP6.</text>
</comment>
<comment type="similarity">
    <text evidence="2">Belongs to the VPS25 family.</text>
</comment>
<reference key="1">
    <citation type="journal article" date="2005" name="BMC Genomics">
        <title>Characterization of 954 bovine full-CDS cDNA sequences.</title>
        <authorList>
            <person name="Harhay G.P."/>
            <person name="Sonstegard T.S."/>
            <person name="Keele J.W."/>
            <person name="Heaton M.P."/>
            <person name="Clawson M.L."/>
            <person name="Snelling W.M."/>
            <person name="Wiedmann R.T."/>
            <person name="Van Tassell C.P."/>
            <person name="Smith T.P.L."/>
        </authorList>
    </citation>
    <scope>NUCLEOTIDE SEQUENCE [LARGE SCALE MRNA]</scope>
</reference>
<reference key="2">
    <citation type="submission" date="2005-08" db="EMBL/GenBank/DDBJ databases">
        <authorList>
            <consortium name="NIH - Mammalian Gene Collection (MGC) project"/>
        </authorList>
    </citation>
    <scope>NUCLEOTIDE SEQUENCE [LARGE SCALE MRNA]</scope>
    <source>
        <strain>Crossbred X Angus</strain>
        <tissue>Ileum</tissue>
    </source>
</reference>
<protein>
    <recommendedName>
        <fullName>Vacuolar protein-sorting-associated protein 25</fullName>
    </recommendedName>
    <alternativeName>
        <fullName>ESCRT-II complex subunit VPS25</fullName>
    </alternativeName>
</protein>
<evidence type="ECO:0000250" key="1"/>
<evidence type="ECO:0000305" key="2"/>
<proteinExistence type="evidence at transcript level"/>
<dbReference type="EMBL" id="BT021014">
    <property type="protein sequence ID" value="AAX09031.1"/>
    <property type="molecule type" value="mRNA"/>
</dbReference>
<dbReference type="EMBL" id="BC102410">
    <property type="protein sequence ID" value="AAI02411.1"/>
    <property type="molecule type" value="mRNA"/>
</dbReference>
<dbReference type="RefSeq" id="NP_001015657.1">
    <property type="nucleotide sequence ID" value="NM_001015657.2"/>
</dbReference>
<dbReference type="SMR" id="Q5E9A6"/>
<dbReference type="FunCoup" id="Q5E9A6">
    <property type="interactions" value="4056"/>
</dbReference>
<dbReference type="STRING" id="9913.ENSBTAP00000026518"/>
<dbReference type="PaxDb" id="9913-ENSBTAP00000026518"/>
<dbReference type="GeneID" id="534750"/>
<dbReference type="KEGG" id="bta:534750"/>
<dbReference type="CTD" id="84313"/>
<dbReference type="VEuPathDB" id="HostDB:ENSBTAG00000019906"/>
<dbReference type="eggNOG" id="KOG4068">
    <property type="taxonomic scope" value="Eukaryota"/>
</dbReference>
<dbReference type="HOGENOM" id="CLU_087657_0_1_1"/>
<dbReference type="InParanoid" id="Q5E9A6"/>
<dbReference type="OMA" id="TRCLIMW"/>
<dbReference type="OrthoDB" id="245150at2759"/>
<dbReference type="TreeFam" id="TF317731"/>
<dbReference type="Reactome" id="R-BTA-917729">
    <property type="pathway name" value="Endosomal Sorting Complex Required For Transport (ESCRT)"/>
</dbReference>
<dbReference type="Proteomes" id="UP000009136">
    <property type="component" value="Chromosome 19"/>
</dbReference>
<dbReference type="Bgee" id="ENSBTAG00000019906">
    <property type="expression patterns" value="Expressed in retina and 105 other cell types or tissues"/>
</dbReference>
<dbReference type="GO" id="GO:0000814">
    <property type="term" value="C:ESCRT II complex"/>
    <property type="evidence" value="ECO:0000318"/>
    <property type="project" value="GO_Central"/>
</dbReference>
<dbReference type="GO" id="GO:0005634">
    <property type="term" value="C:nucleus"/>
    <property type="evidence" value="ECO:0007669"/>
    <property type="project" value="UniProtKB-SubCell"/>
</dbReference>
<dbReference type="GO" id="GO:0042803">
    <property type="term" value="F:protein homodimerization activity"/>
    <property type="evidence" value="ECO:0000318"/>
    <property type="project" value="GO_Central"/>
</dbReference>
<dbReference type="GO" id="GO:0005198">
    <property type="term" value="F:structural molecule activity"/>
    <property type="evidence" value="ECO:0000318"/>
    <property type="project" value="GO_Central"/>
</dbReference>
<dbReference type="GO" id="GO:0043328">
    <property type="term" value="P:protein transport to vacuole involved in ubiquitin-dependent protein catabolic process via the multivesicular body sorting pathway"/>
    <property type="evidence" value="ECO:0000318"/>
    <property type="project" value="GO_Central"/>
</dbReference>
<dbReference type="FunFam" id="1.10.10.10:FF:000141">
    <property type="entry name" value="vacuolar protein-sorting-associated protein 25"/>
    <property type="match status" value="1"/>
</dbReference>
<dbReference type="FunFam" id="1.10.10.570:FF:000001">
    <property type="entry name" value="vacuolar protein-sorting-associated protein 25"/>
    <property type="match status" value="1"/>
</dbReference>
<dbReference type="Gene3D" id="1.10.10.570">
    <property type="entry name" value="Winged helix' DNA-binding domain. Chain C. Domain 1"/>
    <property type="match status" value="1"/>
</dbReference>
<dbReference type="Gene3D" id="1.10.10.10">
    <property type="entry name" value="Winged helix-like DNA-binding domain superfamily/Winged helix DNA-binding domain"/>
    <property type="match status" value="1"/>
</dbReference>
<dbReference type="InterPro" id="IPR008570">
    <property type="entry name" value="ESCRT-II_cplx_Vps25-sub"/>
</dbReference>
<dbReference type="InterPro" id="IPR014041">
    <property type="entry name" value="ESCRT-II_cplx_Vps25-sub_N"/>
</dbReference>
<dbReference type="InterPro" id="IPR036388">
    <property type="entry name" value="WH-like_DNA-bd_sf"/>
</dbReference>
<dbReference type="InterPro" id="IPR036390">
    <property type="entry name" value="WH_DNA-bd_sf"/>
</dbReference>
<dbReference type="PANTHER" id="PTHR13149">
    <property type="entry name" value="VACUOLAR PROTEIN SORTING-ASSOCIATED PROTEIN VPS25"/>
    <property type="match status" value="1"/>
</dbReference>
<dbReference type="PANTHER" id="PTHR13149:SF0">
    <property type="entry name" value="VACUOLAR PROTEIN-SORTING-ASSOCIATED PROTEIN 25"/>
    <property type="match status" value="1"/>
</dbReference>
<dbReference type="Pfam" id="PF05871">
    <property type="entry name" value="ESCRT-II"/>
    <property type="match status" value="1"/>
</dbReference>
<dbReference type="SUPFAM" id="SSF46785">
    <property type="entry name" value="Winged helix' DNA-binding domain"/>
    <property type="match status" value="2"/>
</dbReference>
<gene>
    <name type="primary">VPS25</name>
</gene>
<accession>Q5E9A6</accession>
<accession>Q3T0G0</accession>
<name>VPS25_BOVIN</name>
<keyword id="KW-0963">Cytoplasm</keyword>
<keyword id="KW-0967">Endosome</keyword>
<keyword id="KW-0472">Membrane</keyword>
<keyword id="KW-0539">Nucleus</keyword>
<keyword id="KW-0653">Protein transport</keyword>
<keyword id="KW-1185">Reference proteome</keyword>
<keyword id="KW-0804">Transcription</keyword>
<keyword id="KW-0805">Transcription regulation</keyword>
<keyword id="KW-0813">Transport</keyword>
<feature type="chain" id="PRO_0000215215" description="Vacuolar protein-sorting-associated protein 25">
    <location>
        <begin position="1"/>
        <end position="176"/>
    </location>
</feature>
<sequence length="176" mass="20747">MAMSFEWPWQYRFPPFFTLQPNVDTRQKQLAAWCSLVLTFCRLHKQSSMTVMEAQESPLFNNVKLQRKLPVESIQVVLEELRKKGNLEWLDKNKSSFLIMWRRPEEWGKLIYQWVSKSGQNNSVFTLYELTNGEDTEDEEFHGLDEATLLRALQALQQEHKAEIITVSDGRGVKFF</sequence>